<keyword id="KW-0903">Direct protein sequencing</keyword>
<keyword id="KW-0568">Pathogenesis-related protein</keyword>
<keyword id="KW-0611">Plant defense</keyword>
<accession>P83365</accession>
<reference evidence="3" key="1">
    <citation type="journal article" date="1999" name="J. Plant Physiol.">
        <title>Heavy metal-induced polypeptides in lupin roots are similar to pathogenesis-related proteins.</title>
        <authorList>
            <person name="Przymusinski R."/>
            <person name="Gwozdz E.A."/>
        </authorList>
    </citation>
    <scope>PROTEIN SEQUENCE</scope>
    <scope>INDUCTION</scope>
    <source>
        <strain>cv. Ventus</strain>
        <tissue>Root tip</tissue>
    </source>
</reference>
<comment type="induction">
    <text evidence="1">By heavy metal ions.</text>
</comment>
<comment type="similarity">
    <text evidence="3">Belongs to the BetVI family.</text>
</comment>
<feature type="chain" id="PRO_0000154196" description="Protein PR-L3">
    <location>
        <begin position="1"/>
        <end position="20" status="greater than"/>
    </location>
</feature>
<feature type="non-terminal residue" evidence="2">
    <location>
        <position position="20"/>
    </location>
</feature>
<evidence type="ECO:0000269" key="1">
    <source ref="1"/>
</evidence>
<evidence type="ECO:0000303" key="2">
    <source ref="1"/>
</evidence>
<evidence type="ECO:0000305" key="3"/>
<organism evidence="3">
    <name type="scientific">Lupinus luteus</name>
    <name type="common">European yellow lupine</name>
    <dbReference type="NCBI Taxonomy" id="3873"/>
    <lineage>
        <taxon>Eukaryota</taxon>
        <taxon>Viridiplantae</taxon>
        <taxon>Streptophyta</taxon>
        <taxon>Embryophyta</taxon>
        <taxon>Tracheophyta</taxon>
        <taxon>Spermatophyta</taxon>
        <taxon>Magnoliopsida</taxon>
        <taxon>eudicotyledons</taxon>
        <taxon>Gunneridae</taxon>
        <taxon>Pentapetalae</taxon>
        <taxon>rosids</taxon>
        <taxon>fabids</taxon>
        <taxon>Fabales</taxon>
        <taxon>Fabaceae</taxon>
        <taxon>Papilionoideae</taxon>
        <taxon>50 kb inversion clade</taxon>
        <taxon>genistoids sensu lato</taxon>
        <taxon>core genistoids</taxon>
        <taxon>Genisteae</taxon>
        <taxon>Lupinus</taxon>
    </lineage>
</organism>
<proteinExistence type="evidence at protein level"/>
<dbReference type="GO" id="GO:0006952">
    <property type="term" value="P:defense response"/>
    <property type="evidence" value="ECO:0007669"/>
    <property type="project" value="UniProtKB-KW"/>
</dbReference>
<sequence>GIFTFEDESTTTVAPAKLYK</sequence>
<name>PL3_LUPLU</name>
<protein>
    <recommendedName>
        <fullName>Protein PR-L3</fullName>
    </recommendedName>
</protein>